<organism>
    <name type="scientific">Staphylococcus saprophyticus subsp. saprophyticus (strain ATCC 15305 / DSM 20229 / NCIMB 8711 / NCTC 7292 / S-41)</name>
    <dbReference type="NCBI Taxonomy" id="342451"/>
    <lineage>
        <taxon>Bacteria</taxon>
        <taxon>Bacillati</taxon>
        <taxon>Bacillota</taxon>
        <taxon>Bacilli</taxon>
        <taxon>Bacillales</taxon>
        <taxon>Staphylococcaceae</taxon>
        <taxon>Staphylococcus</taxon>
    </lineage>
</organism>
<proteinExistence type="inferred from homology"/>
<name>LEUD_STAS1</name>
<dbReference type="EC" id="4.2.1.33" evidence="1"/>
<dbReference type="EMBL" id="AP008934">
    <property type="protein sequence ID" value="BAE17963.1"/>
    <property type="molecule type" value="Genomic_DNA"/>
</dbReference>
<dbReference type="RefSeq" id="WP_002482760.1">
    <property type="nucleotide sequence ID" value="NZ_MTGA01000028.1"/>
</dbReference>
<dbReference type="SMR" id="Q49Z15"/>
<dbReference type="GeneID" id="66866978"/>
<dbReference type="KEGG" id="ssp:SSP0818"/>
<dbReference type="PATRIC" id="fig|342451.11.peg.820"/>
<dbReference type="eggNOG" id="COG0066">
    <property type="taxonomic scope" value="Bacteria"/>
</dbReference>
<dbReference type="HOGENOM" id="CLU_081378_0_3_9"/>
<dbReference type="OrthoDB" id="9777465at2"/>
<dbReference type="UniPathway" id="UPA00048">
    <property type="reaction ID" value="UER00071"/>
</dbReference>
<dbReference type="Proteomes" id="UP000006371">
    <property type="component" value="Chromosome"/>
</dbReference>
<dbReference type="GO" id="GO:0009316">
    <property type="term" value="C:3-isopropylmalate dehydratase complex"/>
    <property type="evidence" value="ECO:0007669"/>
    <property type="project" value="InterPro"/>
</dbReference>
<dbReference type="GO" id="GO:0003861">
    <property type="term" value="F:3-isopropylmalate dehydratase activity"/>
    <property type="evidence" value="ECO:0007669"/>
    <property type="project" value="UniProtKB-UniRule"/>
</dbReference>
<dbReference type="GO" id="GO:0009098">
    <property type="term" value="P:L-leucine biosynthetic process"/>
    <property type="evidence" value="ECO:0007669"/>
    <property type="project" value="UniProtKB-UniRule"/>
</dbReference>
<dbReference type="CDD" id="cd01577">
    <property type="entry name" value="IPMI_Swivel"/>
    <property type="match status" value="1"/>
</dbReference>
<dbReference type="FunFam" id="3.20.19.10:FF:000003">
    <property type="entry name" value="3-isopropylmalate dehydratase small subunit"/>
    <property type="match status" value="1"/>
</dbReference>
<dbReference type="Gene3D" id="3.20.19.10">
    <property type="entry name" value="Aconitase, domain 4"/>
    <property type="match status" value="1"/>
</dbReference>
<dbReference type="HAMAP" id="MF_01031">
    <property type="entry name" value="LeuD_type1"/>
    <property type="match status" value="1"/>
</dbReference>
<dbReference type="InterPro" id="IPR004431">
    <property type="entry name" value="3-IsopropMal_deHydase_ssu"/>
</dbReference>
<dbReference type="InterPro" id="IPR015928">
    <property type="entry name" value="Aconitase/3IPM_dehydase_swvl"/>
</dbReference>
<dbReference type="InterPro" id="IPR000573">
    <property type="entry name" value="AconitaseA/IPMdHydase_ssu_swvl"/>
</dbReference>
<dbReference type="InterPro" id="IPR033940">
    <property type="entry name" value="IPMI_Swivel"/>
</dbReference>
<dbReference type="InterPro" id="IPR050075">
    <property type="entry name" value="LeuD"/>
</dbReference>
<dbReference type="NCBIfam" id="TIGR00171">
    <property type="entry name" value="leuD"/>
    <property type="match status" value="1"/>
</dbReference>
<dbReference type="NCBIfam" id="NF002458">
    <property type="entry name" value="PRK01641.1"/>
    <property type="match status" value="1"/>
</dbReference>
<dbReference type="PANTHER" id="PTHR43345:SF5">
    <property type="entry name" value="3-ISOPROPYLMALATE DEHYDRATASE SMALL SUBUNIT"/>
    <property type="match status" value="1"/>
</dbReference>
<dbReference type="PANTHER" id="PTHR43345">
    <property type="entry name" value="3-ISOPROPYLMALATE DEHYDRATASE SMALL SUBUNIT 2-RELATED-RELATED"/>
    <property type="match status" value="1"/>
</dbReference>
<dbReference type="Pfam" id="PF00694">
    <property type="entry name" value="Aconitase_C"/>
    <property type="match status" value="1"/>
</dbReference>
<dbReference type="SUPFAM" id="SSF52016">
    <property type="entry name" value="LeuD/IlvD-like"/>
    <property type="match status" value="1"/>
</dbReference>
<sequence>MEIKPITTYTGKVVPLFNDNIDTDQIIPKVHLKRISKSGFGPFAFDEWRYLDDGSDNPDFNPNKPEYKDASILITGENFGCGSSREHAAWAIKDYGFDIIIAGSYSDIFYMNCTKNAMLPIVLDKEAREYLADAGEITIDLPNQTVSTKDKSFDFQIDETWKKKLVNGLDDIDITLQFEDAIKNYEAAKTY</sequence>
<reference key="1">
    <citation type="journal article" date="2005" name="Proc. Natl. Acad. Sci. U.S.A.">
        <title>Whole genome sequence of Staphylococcus saprophyticus reveals the pathogenesis of uncomplicated urinary tract infection.</title>
        <authorList>
            <person name="Kuroda M."/>
            <person name="Yamashita A."/>
            <person name="Hirakawa H."/>
            <person name="Kumano M."/>
            <person name="Morikawa K."/>
            <person name="Higashide M."/>
            <person name="Maruyama A."/>
            <person name="Inose Y."/>
            <person name="Matoba K."/>
            <person name="Toh H."/>
            <person name="Kuhara S."/>
            <person name="Hattori M."/>
            <person name="Ohta T."/>
        </authorList>
    </citation>
    <scope>NUCLEOTIDE SEQUENCE [LARGE SCALE GENOMIC DNA]</scope>
    <source>
        <strain>ATCC 15305 / DSM 20229 / NCIMB 8711 / NCTC 7292 / S-41</strain>
    </source>
</reference>
<gene>
    <name evidence="1" type="primary">leuD</name>
    <name type="ordered locus">SSP0818</name>
</gene>
<keyword id="KW-0028">Amino-acid biosynthesis</keyword>
<keyword id="KW-0100">Branched-chain amino acid biosynthesis</keyword>
<keyword id="KW-0432">Leucine biosynthesis</keyword>
<keyword id="KW-0456">Lyase</keyword>
<keyword id="KW-1185">Reference proteome</keyword>
<comment type="function">
    <text evidence="1">Catalyzes the isomerization between 2-isopropylmalate and 3-isopropylmalate, via the formation of 2-isopropylmaleate.</text>
</comment>
<comment type="catalytic activity">
    <reaction evidence="1">
        <text>(2R,3S)-3-isopropylmalate = (2S)-2-isopropylmalate</text>
        <dbReference type="Rhea" id="RHEA:32287"/>
        <dbReference type="ChEBI" id="CHEBI:1178"/>
        <dbReference type="ChEBI" id="CHEBI:35121"/>
        <dbReference type="EC" id="4.2.1.33"/>
    </reaction>
</comment>
<comment type="pathway">
    <text evidence="1">Amino-acid biosynthesis; L-leucine biosynthesis; L-leucine from 3-methyl-2-oxobutanoate: step 2/4.</text>
</comment>
<comment type="subunit">
    <text evidence="1">Heterodimer of LeuC and LeuD.</text>
</comment>
<comment type="similarity">
    <text evidence="1">Belongs to the LeuD family. LeuD type 1 subfamily.</text>
</comment>
<accession>Q49Z15</accession>
<feature type="chain" id="PRO_0000141891" description="3-isopropylmalate dehydratase small subunit">
    <location>
        <begin position="1"/>
        <end position="191"/>
    </location>
</feature>
<evidence type="ECO:0000255" key="1">
    <source>
        <dbReference type="HAMAP-Rule" id="MF_01031"/>
    </source>
</evidence>
<protein>
    <recommendedName>
        <fullName evidence="1">3-isopropylmalate dehydratase small subunit</fullName>
        <ecNumber evidence="1">4.2.1.33</ecNumber>
    </recommendedName>
    <alternativeName>
        <fullName evidence="1">Alpha-IPM isomerase</fullName>
        <shortName evidence="1">IPMI</shortName>
    </alternativeName>
    <alternativeName>
        <fullName evidence="1">Isopropylmalate isomerase</fullName>
    </alternativeName>
</protein>